<name>NHAP2_ECO5E</name>
<protein>
    <recommendedName>
        <fullName evidence="1">K(+)/H(+) antiporter NhaP2</fullName>
    </recommendedName>
    <alternativeName>
        <fullName evidence="1">Potassium/proton antiporter NhaP2</fullName>
    </alternativeName>
</protein>
<proteinExistence type="inferred from homology"/>
<keyword id="KW-0050">Antiport</keyword>
<keyword id="KW-0997">Cell inner membrane</keyword>
<keyword id="KW-1003">Cell membrane</keyword>
<keyword id="KW-0406">Ion transport</keyword>
<keyword id="KW-0472">Membrane</keyword>
<keyword id="KW-0630">Potassium</keyword>
<keyword id="KW-0633">Potassium transport</keyword>
<keyword id="KW-0812">Transmembrane</keyword>
<keyword id="KW-1133">Transmembrane helix</keyword>
<keyword id="KW-0813">Transport</keyword>
<comment type="function">
    <text evidence="1">K(+)/H(+) antiporter that extrudes potassium in exchange for external protons and maintains the internal concentration of potassium under toxic levels.</text>
</comment>
<comment type="catalytic activity">
    <reaction evidence="1">
        <text>K(+)(in) + H(+)(out) = K(+)(out) + H(+)(in)</text>
        <dbReference type="Rhea" id="RHEA:29467"/>
        <dbReference type="ChEBI" id="CHEBI:15378"/>
        <dbReference type="ChEBI" id="CHEBI:29103"/>
    </reaction>
    <physiologicalReaction direction="left-to-right" evidence="1">
        <dbReference type="Rhea" id="RHEA:29468"/>
    </physiologicalReaction>
</comment>
<comment type="subcellular location">
    <subcellularLocation>
        <location evidence="1">Cell inner membrane</location>
        <topology evidence="1">Multi-pass membrane protein</topology>
    </subcellularLocation>
</comment>
<comment type="similarity">
    <text evidence="1">Belongs to the monovalent cation:proton antiporter 1 (CPA1) transporter (TC 2.A.36) family. NhaP2 subfamily.</text>
</comment>
<gene>
    <name evidence="1" type="primary">nhaP2</name>
    <name type="synonym">cvrA</name>
    <name type="ordered locus">ECH74115_1678</name>
</gene>
<sequence>MDATTIISLFILGSILVTSSILLSSFSSRLGIPILVIFLAIGMLAGVDGVGGIPFDNYPFAYMVSNLALAIILLDGGMRTQASSFRVALGPALSLATLGVLITSGLTGMMAAWLFNLDLIEGLLIGAIVGSTDAAAVFSLLGGKGLNERVGSTLEIESGSNDPMAVFLTITLIAMIQQHESSVSWMFVVDILQQFGLGIVIGLGGGYLLLQMINRIALPAGLYPLLALSGGILIFALTTALEGSGILAVYLCGFLLGNRPIRNRYGILQNFDGLAWLAQIAMFLVLGLLVNPSDLLPIAIPALILSAWMIFFARPLSVFAGLLPFRGFNLRERVFISWVGLRGAVPIILAVFPMMAGLENARLFFNVAFFVVLVSLLLQGTSLSWAAKKAKVVVPPVGRPVSRVGLDIHPENPWEQFVYQLSADKWCVGAALRDLHMPKETRIAALFRDNQLLHPTGSTRLREGDVLCVIGRERDLPALGKLFSQSPPVALDQRFFGDFILEASAKYADVALIYGLEDGREYRDKQQTLGEIVQQLLGAAPVVGDQVEFAGMIWTVAEKEDNEVLKIGVRVAEEEAES</sequence>
<reference key="1">
    <citation type="journal article" date="2011" name="Proc. Natl. Acad. Sci. U.S.A.">
        <title>Genomic anatomy of Escherichia coli O157:H7 outbreaks.</title>
        <authorList>
            <person name="Eppinger M."/>
            <person name="Mammel M.K."/>
            <person name="Leclerc J.E."/>
            <person name="Ravel J."/>
            <person name="Cebula T.A."/>
        </authorList>
    </citation>
    <scope>NUCLEOTIDE SEQUENCE [LARGE SCALE GENOMIC DNA]</scope>
    <source>
        <strain>EC4115 / EHEC</strain>
    </source>
</reference>
<accession>B5YXL5</accession>
<feature type="chain" id="PRO_1000136700" description="K(+)/H(+) antiporter NhaP2">
    <location>
        <begin position="1"/>
        <end position="578"/>
    </location>
</feature>
<feature type="transmembrane region" description="Helical" evidence="1">
    <location>
        <begin position="6"/>
        <end position="26"/>
    </location>
</feature>
<feature type="transmembrane region" description="Helical" evidence="1">
    <location>
        <begin position="30"/>
        <end position="50"/>
    </location>
</feature>
<feature type="transmembrane region" description="Helical" evidence="1">
    <location>
        <begin position="58"/>
        <end position="78"/>
    </location>
</feature>
<feature type="transmembrane region" description="Helical" evidence="1">
    <location>
        <begin position="87"/>
        <end position="107"/>
    </location>
</feature>
<feature type="transmembrane region" description="Helical" evidence="1">
    <location>
        <begin position="109"/>
        <end position="129"/>
    </location>
</feature>
<feature type="transmembrane region" description="Helical" evidence="1">
    <location>
        <begin position="156"/>
        <end position="176"/>
    </location>
</feature>
<feature type="transmembrane region" description="Helical" evidence="1">
    <location>
        <begin position="185"/>
        <end position="205"/>
    </location>
</feature>
<feature type="transmembrane region" description="Helical" evidence="1">
    <location>
        <begin position="216"/>
        <end position="236"/>
    </location>
</feature>
<feature type="transmembrane region" description="Helical" evidence="1">
    <location>
        <begin position="237"/>
        <end position="257"/>
    </location>
</feature>
<feature type="transmembrane region" description="Helical" evidence="1">
    <location>
        <begin position="270"/>
        <end position="290"/>
    </location>
</feature>
<feature type="transmembrane region" description="Helical" evidence="1">
    <location>
        <begin position="293"/>
        <end position="313"/>
    </location>
</feature>
<feature type="transmembrane region" description="Helical" evidence="1">
    <location>
        <begin position="334"/>
        <end position="354"/>
    </location>
</feature>
<feature type="transmembrane region" description="Helical" evidence="1">
    <location>
        <begin position="363"/>
        <end position="383"/>
    </location>
</feature>
<feature type="domain" description="RCK C-terminal" evidence="1">
    <location>
        <begin position="403"/>
        <end position="485"/>
    </location>
</feature>
<dbReference type="EMBL" id="CP001164">
    <property type="protein sequence ID" value="ACI36050.1"/>
    <property type="molecule type" value="Genomic_DNA"/>
</dbReference>
<dbReference type="RefSeq" id="WP_000340206.1">
    <property type="nucleotide sequence ID" value="NC_011353.1"/>
</dbReference>
<dbReference type="SMR" id="B5YXL5"/>
<dbReference type="KEGG" id="ecf:ECH74115_1678"/>
<dbReference type="HOGENOM" id="CLU_005912_9_2_6"/>
<dbReference type="GO" id="GO:0005886">
    <property type="term" value="C:plasma membrane"/>
    <property type="evidence" value="ECO:0007669"/>
    <property type="project" value="UniProtKB-SubCell"/>
</dbReference>
<dbReference type="GO" id="GO:0050660">
    <property type="term" value="F:flavin adenine dinucleotide binding"/>
    <property type="evidence" value="ECO:0007669"/>
    <property type="project" value="InterPro"/>
</dbReference>
<dbReference type="GO" id="GO:0015386">
    <property type="term" value="F:potassium:proton antiporter activity"/>
    <property type="evidence" value="ECO:0007669"/>
    <property type="project" value="UniProtKB-UniRule"/>
</dbReference>
<dbReference type="GO" id="GO:0006884">
    <property type="term" value="P:cell volume homeostasis"/>
    <property type="evidence" value="ECO:0007669"/>
    <property type="project" value="InterPro"/>
</dbReference>
<dbReference type="FunFam" id="1.20.1530.20:FF:000002">
    <property type="entry name" value="K(+)/H(+) antiporter NhaP2"/>
    <property type="match status" value="1"/>
</dbReference>
<dbReference type="FunFam" id="3.30.465.10:FF:000009">
    <property type="entry name" value="K(+)/H(+) antiporter NhaP2"/>
    <property type="match status" value="1"/>
</dbReference>
<dbReference type="FunFam" id="3.30.70.1450:FF:000007">
    <property type="entry name" value="K(+)/H(+) antiporter NhaP2"/>
    <property type="match status" value="1"/>
</dbReference>
<dbReference type="Gene3D" id="1.20.1530.20">
    <property type="match status" value="1"/>
</dbReference>
<dbReference type="Gene3D" id="3.30.465.10">
    <property type="match status" value="1"/>
</dbReference>
<dbReference type="Gene3D" id="3.30.70.1450">
    <property type="entry name" value="Regulator of K+ conductance, C-terminal domain"/>
    <property type="match status" value="1"/>
</dbReference>
<dbReference type="HAMAP" id="MF_01075">
    <property type="entry name" value="NhaP2"/>
    <property type="match status" value="1"/>
</dbReference>
<dbReference type="InterPro" id="IPR006153">
    <property type="entry name" value="Cation/H_exchanger_TM"/>
</dbReference>
<dbReference type="InterPro" id="IPR036318">
    <property type="entry name" value="FAD-bd_PCMH-like_sf"/>
</dbReference>
<dbReference type="InterPro" id="IPR016169">
    <property type="entry name" value="FAD-bd_PCMH_sub2"/>
</dbReference>
<dbReference type="InterPro" id="IPR038770">
    <property type="entry name" value="Na+/solute_symporter_sf"/>
</dbReference>
<dbReference type="InterPro" id="IPR023729">
    <property type="entry name" value="NhaP2"/>
</dbReference>
<dbReference type="InterPro" id="IPR006037">
    <property type="entry name" value="RCK_C"/>
</dbReference>
<dbReference type="InterPro" id="IPR036721">
    <property type="entry name" value="RCK_C_sf"/>
</dbReference>
<dbReference type="InterPro" id="IPR005170">
    <property type="entry name" value="Transptr-assoc_dom"/>
</dbReference>
<dbReference type="NCBIfam" id="NF003714">
    <property type="entry name" value="PRK05326.1-1"/>
    <property type="match status" value="1"/>
</dbReference>
<dbReference type="NCBIfam" id="NF003715">
    <property type="entry name" value="PRK05326.1-2"/>
    <property type="match status" value="1"/>
</dbReference>
<dbReference type="NCBIfam" id="NF003716">
    <property type="entry name" value="PRK05326.1-3"/>
    <property type="match status" value="1"/>
</dbReference>
<dbReference type="PANTHER" id="PTHR32507:SF7">
    <property type="entry name" value="K(+)_H(+) ANTIPORTER NHAP2"/>
    <property type="match status" value="1"/>
</dbReference>
<dbReference type="PANTHER" id="PTHR32507">
    <property type="entry name" value="NA(+)/H(+) ANTIPORTER 1"/>
    <property type="match status" value="1"/>
</dbReference>
<dbReference type="Pfam" id="PF03471">
    <property type="entry name" value="CorC_HlyC"/>
    <property type="match status" value="1"/>
</dbReference>
<dbReference type="Pfam" id="PF00999">
    <property type="entry name" value="Na_H_Exchanger"/>
    <property type="match status" value="1"/>
</dbReference>
<dbReference type="Pfam" id="PF02080">
    <property type="entry name" value="TrkA_C"/>
    <property type="match status" value="1"/>
</dbReference>
<dbReference type="SMART" id="SM01091">
    <property type="entry name" value="CorC_HlyC"/>
    <property type="match status" value="1"/>
</dbReference>
<dbReference type="SUPFAM" id="SSF56176">
    <property type="entry name" value="FAD-binding/transporter-associated domain-like"/>
    <property type="match status" value="1"/>
</dbReference>
<dbReference type="SUPFAM" id="SSF116726">
    <property type="entry name" value="TrkA C-terminal domain-like"/>
    <property type="match status" value="1"/>
</dbReference>
<dbReference type="PROSITE" id="PS51202">
    <property type="entry name" value="RCK_C"/>
    <property type="match status" value="1"/>
</dbReference>
<evidence type="ECO:0000255" key="1">
    <source>
        <dbReference type="HAMAP-Rule" id="MF_01075"/>
    </source>
</evidence>
<organism>
    <name type="scientific">Escherichia coli O157:H7 (strain EC4115 / EHEC)</name>
    <dbReference type="NCBI Taxonomy" id="444450"/>
    <lineage>
        <taxon>Bacteria</taxon>
        <taxon>Pseudomonadati</taxon>
        <taxon>Pseudomonadota</taxon>
        <taxon>Gammaproteobacteria</taxon>
        <taxon>Enterobacterales</taxon>
        <taxon>Enterobacteriaceae</taxon>
        <taxon>Escherichia</taxon>
    </lineage>
</organism>